<protein>
    <recommendedName>
        <fullName>MADS-box transcription factor 1</fullName>
    </recommendedName>
</protein>
<dbReference type="EMBL" id="CU329671">
    <property type="protein sequence ID" value="CAA17060.2"/>
    <property type="molecule type" value="Genomic_DNA"/>
</dbReference>
<dbReference type="PIR" id="T39837">
    <property type="entry name" value="T39837"/>
</dbReference>
<dbReference type="RefSeq" id="NP_595972.2">
    <property type="nucleotide sequence ID" value="NM_001021880.3"/>
</dbReference>
<dbReference type="SMR" id="O42954"/>
<dbReference type="BioGRID" id="277168">
    <property type="interactions" value="57"/>
</dbReference>
<dbReference type="FunCoup" id="O42954">
    <property type="interactions" value="1"/>
</dbReference>
<dbReference type="STRING" id="284812.O42954"/>
<dbReference type="iPTMnet" id="O42954"/>
<dbReference type="SwissPalm" id="O42954"/>
<dbReference type="PaxDb" id="4896-SPBC19G7.06.1"/>
<dbReference type="EnsemblFungi" id="SPBC19G7.06.1">
    <property type="protein sequence ID" value="SPBC19G7.06.1:pep"/>
    <property type="gene ID" value="SPBC19G7.06"/>
</dbReference>
<dbReference type="PomBase" id="SPBC19G7.06">
    <property type="gene designation" value="mbx1"/>
</dbReference>
<dbReference type="VEuPathDB" id="FungiDB:SPBC19G7.06"/>
<dbReference type="eggNOG" id="KOG0014">
    <property type="taxonomic scope" value="Eukaryota"/>
</dbReference>
<dbReference type="HOGENOM" id="CLU_598731_0_0_1"/>
<dbReference type="InParanoid" id="O42954"/>
<dbReference type="OMA" id="KNACHVY"/>
<dbReference type="Reactome" id="R-SPO-525793">
    <property type="pathway name" value="Myogenesis"/>
</dbReference>
<dbReference type="PRO" id="PR:O42954"/>
<dbReference type="Proteomes" id="UP000002485">
    <property type="component" value="Chromosome II"/>
</dbReference>
<dbReference type="GO" id="GO:0005829">
    <property type="term" value="C:cytosol"/>
    <property type="evidence" value="ECO:0007005"/>
    <property type="project" value="PomBase"/>
</dbReference>
<dbReference type="GO" id="GO:0097221">
    <property type="term" value="C:M/G1 phase-specific MADS box-forkhead transcription factor complex"/>
    <property type="evidence" value="ECO:0000314"/>
    <property type="project" value="PomBase"/>
</dbReference>
<dbReference type="GO" id="GO:0001228">
    <property type="term" value="F:DNA-binding transcription activator activity, RNA polymerase II-specific"/>
    <property type="evidence" value="ECO:0000314"/>
    <property type="project" value="PomBase"/>
</dbReference>
<dbReference type="GO" id="GO:0000981">
    <property type="term" value="F:DNA-binding transcription factor activity, RNA polymerase II-specific"/>
    <property type="evidence" value="ECO:0000314"/>
    <property type="project" value="PomBase"/>
</dbReference>
<dbReference type="GO" id="GO:0046983">
    <property type="term" value="F:protein dimerization activity"/>
    <property type="evidence" value="ECO:0007669"/>
    <property type="project" value="InterPro"/>
</dbReference>
<dbReference type="GO" id="GO:0000978">
    <property type="term" value="F:RNA polymerase II cis-regulatory region sequence-specific DNA binding"/>
    <property type="evidence" value="ECO:0000314"/>
    <property type="project" value="PomBase"/>
</dbReference>
<dbReference type="GO" id="GO:0051301">
    <property type="term" value="P:cell division"/>
    <property type="evidence" value="ECO:0007669"/>
    <property type="project" value="UniProtKB-KW"/>
</dbReference>
<dbReference type="GO" id="GO:0045944">
    <property type="term" value="P:positive regulation of transcription by RNA polymerase II"/>
    <property type="evidence" value="ECO:0000318"/>
    <property type="project" value="GO_Central"/>
</dbReference>
<dbReference type="CDD" id="cd00266">
    <property type="entry name" value="MADS_SRF_like"/>
    <property type="match status" value="1"/>
</dbReference>
<dbReference type="FunFam" id="3.40.1810.10:FF:000059">
    <property type="match status" value="1"/>
</dbReference>
<dbReference type="Gene3D" id="3.40.1810.10">
    <property type="entry name" value="Transcription factor, MADS-box"/>
    <property type="match status" value="1"/>
</dbReference>
<dbReference type="InterPro" id="IPR050142">
    <property type="entry name" value="MADS-box/MEF2_TF"/>
</dbReference>
<dbReference type="InterPro" id="IPR033897">
    <property type="entry name" value="SRF-like_MADS-box"/>
</dbReference>
<dbReference type="InterPro" id="IPR002100">
    <property type="entry name" value="TF_MADSbox"/>
</dbReference>
<dbReference type="InterPro" id="IPR036879">
    <property type="entry name" value="TF_MADSbox_sf"/>
</dbReference>
<dbReference type="PANTHER" id="PTHR48019">
    <property type="entry name" value="SERUM RESPONSE FACTOR HOMOLOG"/>
    <property type="match status" value="1"/>
</dbReference>
<dbReference type="Pfam" id="PF00319">
    <property type="entry name" value="SRF-TF"/>
    <property type="match status" value="1"/>
</dbReference>
<dbReference type="PRINTS" id="PR00404">
    <property type="entry name" value="MADSDOMAIN"/>
</dbReference>
<dbReference type="SMART" id="SM00432">
    <property type="entry name" value="MADS"/>
    <property type="match status" value="1"/>
</dbReference>
<dbReference type="SUPFAM" id="SSF55455">
    <property type="entry name" value="SRF-like"/>
    <property type="match status" value="1"/>
</dbReference>
<dbReference type="PROSITE" id="PS00350">
    <property type="entry name" value="MADS_BOX_1"/>
    <property type="match status" value="1"/>
</dbReference>
<dbReference type="PROSITE" id="PS50066">
    <property type="entry name" value="MADS_BOX_2"/>
    <property type="match status" value="1"/>
</dbReference>
<comment type="function">
    <text evidence="3">Acts as a transcriptional activator with a role in the regulation of mitosis. Regulates septation and the periodic transcription of cdc15.</text>
</comment>
<comment type="subcellular location">
    <subcellularLocation>
        <location evidence="1">Nucleus</location>
    </subcellularLocation>
</comment>
<comment type="PTM">
    <text evidence="3 4">Phosphorylated. Occurs periodically during mitosis.</text>
</comment>
<evidence type="ECO:0000255" key="1">
    <source>
        <dbReference type="PROSITE-ProRule" id="PRU00251"/>
    </source>
</evidence>
<evidence type="ECO:0000256" key="2">
    <source>
        <dbReference type="SAM" id="MobiDB-lite"/>
    </source>
</evidence>
<evidence type="ECO:0000269" key="3">
    <source>
    </source>
</evidence>
<evidence type="ECO:0000269" key="4">
    <source>
    </source>
</evidence>
<accession>O42954</accession>
<organism>
    <name type="scientific">Schizosaccharomyces pombe (strain 972 / ATCC 24843)</name>
    <name type="common">Fission yeast</name>
    <dbReference type="NCBI Taxonomy" id="284812"/>
    <lineage>
        <taxon>Eukaryota</taxon>
        <taxon>Fungi</taxon>
        <taxon>Dikarya</taxon>
        <taxon>Ascomycota</taxon>
        <taxon>Taphrinomycotina</taxon>
        <taxon>Schizosaccharomycetes</taxon>
        <taxon>Schizosaccharomycetales</taxon>
        <taxon>Schizosaccharomycetaceae</taxon>
        <taxon>Schizosaccharomyces</taxon>
    </lineage>
</organism>
<keyword id="KW-0010">Activator</keyword>
<keyword id="KW-0131">Cell cycle</keyword>
<keyword id="KW-0132">Cell division</keyword>
<keyword id="KW-0238">DNA-binding</keyword>
<keyword id="KW-0498">Mitosis</keyword>
<keyword id="KW-0539">Nucleus</keyword>
<keyword id="KW-0597">Phosphoprotein</keyword>
<keyword id="KW-1185">Reference proteome</keyword>
<keyword id="KW-0804">Transcription</keyword>
<keyword id="KW-0805">Transcription regulation</keyword>
<name>MBX1_SCHPO</name>
<reference key="1">
    <citation type="journal article" date="2002" name="Nature">
        <title>The genome sequence of Schizosaccharomyces pombe.</title>
        <authorList>
            <person name="Wood V."/>
            <person name="Gwilliam R."/>
            <person name="Rajandream M.A."/>
            <person name="Lyne M.H."/>
            <person name="Lyne R."/>
            <person name="Stewart A."/>
            <person name="Sgouros J.G."/>
            <person name="Peat N."/>
            <person name="Hayles J."/>
            <person name="Baker S.G."/>
            <person name="Basham D."/>
            <person name="Bowman S."/>
            <person name="Brooks K."/>
            <person name="Brown D."/>
            <person name="Brown S."/>
            <person name="Chillingworth T."/>
            <person name="Churcher C.M."/>
            <person name="Collins M."/>
            <person name="Connor R."/>
            <person name="Cronin A."/>
            <person name="Davis P."/>
            <person name="Feltwell T."/>
            <person name="Fraser A."/>
            <person name="Gentles S."/>
            <person name="Goble A."/>
            <person name="Hamlin N."/>
            <person name="Harris D.E."/>
            <person name="Hidalgo J."/>
            <person name="Hodgson G."/>
            <person name="Holroyd S."/>
            <person name="Hornsby T."/>
            <person name="Howarth S."/>
            <person name="Huckle E.J."/>
            <person name="Hunt S."/>
            <person name="Jagels K."/>
            <person name="James K.D."/>
            <person name="Jones L."/>
            <person name="Jones M."/>
            <person name="Leather S."/>
            <person name="McDonald S."/>
            <person name="McLean J."/>
            <person name="Mooney P."/>
            <person name="Moule S."/>
            <person name="Mungall K.L."/>
            <person name="Murphy L.D."/>
            <person name="Niblett D."/>
            <person name="Odell C."/>
            <person name="Oliver K."/>
            <person name="O'Neil S."/>
            <person name="Pearson D."/>
            <person name="Quail M.A."/>
            <person name="Rabbinowitsch E."/>
            <person name="Rutherford K.M."/>
            <person name="Rutter S."/>
            <person name="Saunders D."/>
            <person name="Seeger K."/>
            <person name="Sharp S."/>
            <person name="Skelton J."/>
            <person name="Simmonds M.N."/>
            <person name="Squares R."/>
            <person name="Squares S."/>
            <person name="Stevens K."/>
            <person name="Taylor K."/>
            <person name="Taylor R.G."/>
            <person name="Tivey A."/>
            <person name="Walsh S.V."/>
            <person name="Warren T."/>
            <person name="Whitehead S."/>
            <person name="Woodward J.R."/>
            <person name="Volckaert G."/>
            <person name="Aert R."/>
            <person name="Robben J."/>
            <person name="Grymonprez B."/>
            <person name="Weltjens I."/>
            <person name="Vanstreels E."/>
            <person name="Rieger M."/>
            <person name="Schaefer M."/>
            <person name="Mueller-Auer S."/>
            <person name="Gabel C."/>
            <person name="Fuchs M."/>
            <person name="Duesterhoeft A."/>
            <person name="Fritzc C."/>
            <person name="Holzer E."/>
            <person name="Moestl D."/>
            <person name="Hilbert H."/>
            <person name="Borzym K."/>
            <person name="Langer I."/>
            <person name="Beck A."/>
            <person name="Lehrach H."/>
            <person name="Reinhardt R."/>
            <person name="Pohl T.M."/>
            <person name="Eger P."/>
            <person name="Zimmermann W."/>
            <person name="Wedler H."/>
            <person name="Wambutt R."/>
            <person name="Purnelle B."/>
            <person name="Goffeau A."/>
            <person name="Cadieu E."/>
            <person name="Dreano S."/>
            <person name="Gloux S."/>
            <person name="Lelaure V."/>
            <person name="Mottier S."/>
            <person name="Galibert F."/>
            <person name="Aves S.J."/>
            <person name="Xiang Z."/>
            <person name="Hunt C."/>
            <person name="Moore K."/>
            <person name="Hurst S.M."/>
            <person name="Lucas M."/>
            <person name="Rochet M."/>
            <person name="Gaillardin C."/>
            <person name="Tallada V.A."/>
            <person name="Garzon A."/>
            <person name="Thode G."/>
            <person name="Daga R.R."/>
            <person name="Cruzado L."/>
            <person name="Jimenez J."/>
            <person name="Sanchez M."/>
            <person name="del Rey F."/>
            <person name="Benito J."/>
            <person name="Dominguez A."/>
            <person name="Revuelta J.L."/>
            <person name="Moreno S."/>
            <person name="Armstrong J."/>
            <person name="Forsburg S.L."/>
            <person name="Cerutti L."/>
            <person name="Lowe T."/>
            <person name="McCombie W.R."/>
            <person name="Paulsen I."/>
            <person name="Potashkin J."/>
            <person name="Shpakovski G.V."/>
            <person name="Ussery D."/>
            <person name="Barrell B.G."/>
            <person name="Nurse P."/>
        </authorList>
    </citation>
    <scope>NUCLEOTIDE SEQUENCE [LARGE SCALE GENOMIC DNA]</scope>
    <source>
        <strain>972 / ATCC 24843</strain>
    </source>
</reference>
<reference key="2">
    <citation type="journal article" date="2004" name="J. Cell Sci.">
        <title>Fkh2p and Sep1p regulate mitotic gene transcription in fission yeast.</title>
        <authorList>
            <person name="Buck V."/>
            <person name="Ng S.S."/>
            <person name="Ruiz-Garcia A.B."/>
            <person name="Papadopoulou K."/>
            <person name="Bhatti S."/>
            <person name="Samuel J.M."/>
            <person name="Anderson M."/>
            <person name="Millar J.B.A."/>
            <person name="McInerny C.J."/>
        </authorList>
    </citation>
    <scope>FUNCTION</scope>
    <scope>PHOSPHORYLATION</scope>
</reference>
<reference key="3">
    <citation type="journal article" date="2008" name="J. Proteome Res.">
        <title>Phosphoproteome analysis of fission yeast.</title>
        <authorList>
            <person name="Wilson-Grady J.T."/>
            <person name="Villen J."/>
            <person name="Gygi S.P."/>
        </authorList>
    </citation>
    <scope>PHOSPHORYLATION [LARGE SCALE ANALYSIS] AT SER-372</scope>
    <scope>IDENTIFICATION BY MASS SPECTROMETRY</scope>
</reference>
<sequence>MDINPPPSTAPSSPRRSIQRISDAKNKALTFNRRRLGLIKKAHELSVLCDAKVVVMIFDSKNACHVYSSEEPEEQRDALLQKFLNKDFVTVDPLRNINPNIPSDESLHNWRPKDKRIASVTTYSAQPSNNCSSATDSENDFQSFTIKSSTTYHTTPTTASENKKIESITIPDHASVYNDLPLSPTVKHSFVSPVSGDYSDSPLEPSSSSSFSVPPESLNPTLSFQHNDVPQTDNFIPFLTPKRQAYGQSSSRADRSSVRRSQSFKNRRNGKPRISRLHTSHASIDGLTDFIQSPSSGYLDPSSTPITPLDSAINQITPPFLPDNLGQENRGELYSHDNPTSMVYEHPKFDELPNGFIDTHELNILSRSFTASPNQILRESNMVNQDSFTDNPVDATWDALIGTTQIDLDLDYERSSIPSSTIPADQLKDGVPTNSVYRNNMVDHNLYPSLNIERNAP</sequence>
<feature type="chain" id="PRO_0000199443" description="MADS-box transcription factor 1">
    <location>
        <begin position="1"/>
        <end position="457"/>
    </location>
</feature>
<feature type="domain" description="MADS-box" evidence="1">
    <location>
        <begin position="11"/>
        <end position="71"/>
    </location>
</feature>
<feature type="region of interest" description="Disordered" evidence="2">
    <location>
        <begin position="195"/>
        <end position="278"/>
    </location>
</feature>
<feature type="region of interest" description="Disordered" evidence="2">
    <location>
        <begin position="295"/>
        <end position="328"/>
    </location>
</feature>
<feature type="compositionally biased region" description="Low complexity" evidence="2">
    <location>
        <begin position="199"/>
        <end position="216"/>
    </location>
</feature>
<feature type="compositionally biased region" description="Polar residues" evidence="2">
    <location>
        <begin position="218"/>
        <end position="234"/>
    </location>
</feature>
<feature type="compositionally biased region" description="Basic residues" evidence="2">
    <location>
        <begin position="265"/>
        <end position="278"/>
    </location>
</feature>
<feature type="compositionally biased region" description="Polar residues" evidence="2">
    <location>
        <begin position="295"/>
        <end position="317"/>
    </location>
</feature>
<feature type="modified residue" description="Phosphoserine" evidence="4">
    <location>
        <position position="372"/>
    </location>
</feature>
<proteinExistence type="evidence at protein level"/>
<gene>
    <name type="primary">mbx1</name>
    <name type="ORF">SPBC19G7.06</name>
</gene>